<sequence>MSYRKLGWDSSQRKAMLREMTTQLIINERIVTTEARAKEVRRTAEKMITLGKRGDLAARRKAAAFVRNEIADIHEEGDEVVVKSALQKLFSDVAPRYKDRNGGYTRIMKLAVPRKGDAAPMVVLELV</sequence>
<name>RL17_LACDB</name>
<keyword id="KW-0687">Ribonucleoprotein</keyword>
<keyword id="KW-0689">Ribosomal protein</keyword>
<dbReference type="EMBL" id="CP000412">
    <property type="protein sequence ID" value="ABJ58034.1"/>
    <property type="molecule type" value="Genomic_DNA"/>
</dbReference>
<dbReference type="RefSeq" id="WP_002878136.1">
    <property type="nucleotide sequence ID" value="NC_008529.1"/>
</dbReference>
<dbReference type="SMR" id="Q04BY8"/>
<dbReference type="GeneID" id="69668453"/>
<dbReference type="KEGG" id="lbu:LBUL_0377"/>
<dbReference type="HOGENOM" id="CLU_074407_2_2_9"/>
<dbReference type="BioCyc" id="LDEL321956:LBUL_RS01760-MONOMER"/>
<dbReference type="GO" id="GO:0022625">
    <property type="term" value="C:cytosolic large ribosomal subunit"/>
    <property type="evidence" value="ECO:0007669"/>
    <property type="project" value="TreeGrafter"/>
</dbReference>
<dbReference type="GO" id="GO:0003735">
    <property type="term" value="F:structural constituent of ribosome"/>
    <property type="evidence" value="ECO:0007669"/>
    <property type="project" value="InterPro"/>
</dbReference>
<dbReference type="GO" id="GO:0006412">
    <property type="term" value="P:translation"/>
    <property type="evidence" value="ECO:0007669"/>
    <property type="project" value="UniProtKB-UniRule"/>
</dbReference>
<dbReference type="FunFam" id="3.90.1030.10:FF:000002">
    <property type="entry name" value="50S ribosomal protein L17"/>
    <property type="match status" value="1"/>
</dbReference>
<dbReference type="Gene3D" id="3.90.1030.10">
    <property type="entry name" value="Ribosomal protein L17"/>
    <property type="match status" value="1"/>
</dbReference>
<dbReference type="HAMAP" id="MF_01368">
    <property type="entry name" value="Ribosomal_bL17"/>
    <property type="match status" value="1"/>
</dbReference>
<dbReference type="InterPro" id="IPR000456">
    <property type="entry name" value="Ribosomal_bL17"/>
</dbReference>
<dbReference type="InterPro" id="IPR047859">
    <property type="entry name" value="Ribosomal_bL17_CS"/>
</dbReference>
<dbReference type="InterPro" id="IPR036373">
    <property type="entry name" value="Ribosomal_bL17_sf"/>
</dbReference>
<dbReference type="NCBIfam" id="TIGR00059">
    <property type="entry name" value="L17"/>
    <property type="match status" value="1"/>
</dbReference>
<dbReference type="PANTHER" id="PTHR14413:SF16">
    <property type="entry name" value="LARGE RIBOSOMAL SUBUNIT PROTEIN BL17M"/>
    <property type="match status" value="1"/>
</dbReference>
<dbReference type="PANTHER" id="PTHR14413">
    <property type="entry name" value="RIBOSOMAL PROTEIN L17"/>
    <property type="match status" value="1"/>
</dbReference>
<dbReference type="Pfam" id="PF01196">
    <property type="entry name" value="Ribosomal_L17"/>
    <property type="match status" value="1"/>
</dbReference>
<dbReference type="SUPFAM" id="SSF64263">
    <property type="entry name" value="Prokaryotic ribosomal protein L17"/>
    <property type="match status" value="1"/>
</dbReference>
<dbReference type="PROSITE" id="PS01167">
    <property type="entry name" value="RIBOSOMAL_L17"/>
    <property type="match status" value="1"/>
</dbReference>
<comment type="subunit">
    <text evidence="1">Part of the 50S ribosomal subunit. Contacts protein L32.</text>
</comment>
<comment type="similarity">
    <text evidence="1">Belongs to the bacterial ribosomal protein bL17 family.</text>
</comment>
<evidence type="ECO:0000255" key="1">
    <source>
        <dbReference type="HAMAP-Rule" id="MF_01368"/>
    </source>
</evidence>
<evidence type="ECO:0000305" key="2"/>
<accession>Q04BY8</accession>
<reference key="1">
    <citation type="journal article" date="2006" name="Proc. Natl. Acad. Sci. U.S.A.">
        <title>Comparative genomics of the lactic acid bacteria.</title>
        <authorList>
            <person name="Makarova K.S."/>
            <person name="Slesarev A."/>
            <person name="Wolf Y.I."/>
            <person name="Sorokin A."/>
            <person name="Mirkin B."/>
            <person name="Koonin E.V."/>
            <person name="Pavlov A."/>
            <person name="Pavlova N."/>
            <person name="Karamychev V."/>
            <person name="Polouchine N."/>
            <person name="Shakhova V."/>
            <person name="Grigoriev I."/>
            <person name="Lou Y."/>
            <person name="Rohksar D."/>
            <person name="Lucas S."/>
            <person name="Huang K."/>
            <person name="Goodstein D.M."/>
            <person name="Hawkins T."/>
            <person name="Plengvidhya V."/>
            <person name="Welker D."/>
            <person name="Hughes J."/>
            <person name="Goh Y."/>
            <person name="Benson A."/>
            <person name="Baldwin K."/>
            <person name="Lee J.-H."/>
            <person name="Diaz-Muniz I."/>
            <person name="Dosti B."/>
            <person name="Smeianov V."/>
            <person name="Wechter W."/>
            <person name="Barabote R."/>
            <person name="Lorca G."/>
            <person name="Altermann E."/>
            <person name="Barrangou R."/>
            <person name="Ganesan B."/>
            <person name="Xie Y."/>
            <person name="Rawsthorne H."/>
            <person name="Tamir D."/>
            <person name="Parker C."/>
            <person name="Breidt F."/>
            <person name="Broadbent J.R."/>
            <person name="Hutkins R."/>
            <person name="O'Sullivan D."/>
            <person name="Steele J."/>
            <person name="Unlu G."/>
            <person name="Saier M.H. Jr."/>
            <person name="Klaenhammer T."/>
            <person name="Richardson P."/>
            <person name="Kozyavkin S."/>
            <person name="Weimer B.C."/>
            <person name="Mills D.A."/>
        </authorList>
    </citation>
    <scope>NUCLEOTIDE SEQUENCE [LARGE SCALE GENOMIC DNA]</scope>
    <source>
        <strain>ATCC BAA-365 / Lb-18</strain>
    </source>
</reference>
<protein>
    <recommendedName>
        <fullName evidence="1">Large ribosomal subunit protein bL17</fullName>
    </recommendedName>
    <alternativeName>
        <fullName evidence="2">50S ribosomal protein L17</fullName>
    </alternativeName>
</protein>
<proteinExistence type="inferred from homology"/>
<feature type="chain" id="PRO_1000055850" description="Large ribosomal subunit protein bL17">
    <location>
        <begin position="1"/>
        <end position="127"/>
    </location>
</feature>
<gene>
    <name evidence="1" type="primary">rplQ</name>
    <name type="ordered locus">LBUL_0377</name>
</gene>
<organism>
    <name type="scientific">Lactobacillus delbrueckii subsp. bulgaricus (strain ATCC BAA-365 / Lb-18)</name>
    <dbReference type="NCBI Taxonomy" id="321956"/>
    <lineage>
        <taxon>Bacteria</taxon>
        <taxon>Bacillati</taxon>
        <taxon>Bacillota</taxon>
        <taxon>Bacilli</taxon>
        <taxon>Lactobacillales</taxon>
        <taxon>Lactobacillaceae</taxon>
        <taxon>Lactobacillus</taxon>
    </lineage>
</organism>